<dbReference type="EMBL" id="AP008232">
    <property type="protein sequence ID" value="BAE75677.1"/>
    <property type="molecule type" value="Genomic_DNA"/>
</dbReference>
<dbReference type="RefSeq" id="WP_011412208.1">
    <property type="nucleotide sequence ID" value="NC_007712.1"/>
</dbReference>
<dbReference type="STRING" id="343509.SG2402"/>
<dbReference type="KEGG" id="sgl:SG2402"/>
<dbReference type="eggNOG" id="COG3158">
    <property type="taxonomic scope" value="Bacteria"/>
</dbReference>
<dbReference type="HOGENOM" id="CLU_008142_4_2_6"/>
<dbReference type="OrthoDB" id="9805577at2"/>
<dbReference type="BioCyc" id="SGLO343509:SGP1_RS21815-MONOMER"/>
<dbReference type="Proteomes" id="UP000001932">
    <property type="component" value="Chromosome"/>
</dbReference>
<dbReference type="GO" id="GO:0005886">
    <property type="term" value="C:plasma membrane"/>
    <property type="evidence" value="ECO:0007669"/>
    <property type="project" value="UniProtKB-SubCell"/>
</dbReference>
<dbReference type="GO" id="GO:0015079">
    <property type="term" value="F:potassium ion transmembrane transporter activity"/>
    <property type="evidence" value="ECO:0007669"/>
    <property type="project" value="UniProtKB-UniRule"/>
</dbReference>
<dbReference type="GO" id="GO:0015293">
    <property type="term" value="F:symporter activity"/>
    <property type="evidence" value="ECO:0007669"/>
    <property type="project" value="UniProtKB-UniRule"/>
</dbReference>
<dbReference type="HAMAP" id="MF_01522">
    <property type="entry name" value="Kup"/>
    <property type="match status" value="1"/>
</dbReference>
<dbReference type="InterPro" id="IPR003855">
    <property type="entry name" value="K+_transporter"/>
</dbReference>
<dbReference type="InterPro" id="IPR053952">
    <property type="entry name" value="K_trans_C"/>
</dbReference>
<dbReference type="InterPro" id="IPR053951">
    <property type="entry name" value="K_trans_N"/>
</dbReference>
<dbReference type="InterPro" id="IPR023051">
    <property type="entry name" value="Kup"/>
</dbReference>
<dbReference type="NCBIfam" id="TIGR00794">
    <property type="entry name" value="kup"/>
    <property type="match status" value="1"/>
</dbReference>
<dbReference type="NCBIfam" id="NF008015">
    <property type="entry name" value="PRK10745.1"/>
    <property type="match status" value="1"/>
</dbReference>
<dbReference type="PANTHER" id="PTHR30540:SF79">
    <property type="entry name" value="LOW AFFINITY POTASSIUM TRANSPORT SYSTEM PROTEIN KUP"/>
    <property type="match status" value="1"/>
</dbReference>
<dbReference type="PANTHER" id="PTHR30540">
    <property type="entry name" value="OSMOTIC STRESS POTASSIUM TRANSPORTER"/>
    <property type="match status" value="1"/>
</dbReference>
<dbReference type="Pfam" id="PF02705">
    <property type="entry name" value="K_trans"/>
    <property type="match status" value="1"/>
</dbReference>
<dbReference type="Pfam" id="PF22776">
    <property type="entry name" value="K_trans_C"/>
    <property type="match status" value="1"/>
</dbReference>
<name>KUP_SODGM</name>
<gene>
    <name evidence="1" type="primary">kup</name>
    <name type="ordered locus">SG2402</name>
</gene>
<proteinExistence type="inferred from homology"/>
<feature type="chain" id="PRO_0000279832" description="Low affinity potassium transport system protein Kup">
    <location>
        <begin position="1"/>
        <end position="622"/>
    </location>
</feature>
<feature type="transmembrane region" description="Helical" evidence="1">
    <location>
        <begin position="9"/>
        <end position="29"/>
    </location>
</feature>
<feature type="transmembrane region" description="Helical" evidence="1">
    <location>
        <begin position="52"/>
        <end position="72"/>
    </location>
</feature>
<feature type="transmembrane region" description="Helical" evidence="1">
    <location>
        <begin position="99"/>
        <end position="119"/>
    </location>
</feature>
<feature type="transmembrane region" description="Helical" evidence="1">
    <location>
        <begin position="137"/>
        <end position="157"/>
    </location>
</feature>
<feature type="transmembrane region" description="Helical" evidence="1">
    <location>
        <begin position="165"/>
        <end position="185"/>
    </location>
</feature>
<feature type="transmembrane region" description="Helical" evidence="1">
    <location>
        <begin position="213"/>
        <end position="233"/>
    </location>
</feature>
<feature type="transmembrane region" description="Helical" evidence="1">
    <location>
        <begin position="247"/>
        <end position="267"/>
    </location>
</feature>
<feature type="transmembrane region" description="Helical" evidence="1">
    <location>
        <begin position="276"/>
        <end position="296"/>
    </location>
</feature>
<feature type="transmembrane region" description="Helical" evidence="1">
    <location>
        <begin position="337"/>
        <end position="357"/>
    </location>
</feature>
<feature type="transmembrane region" description="Helical" evidence="1">
    <location>
        <begin position="363"/>
        <end position="383"/>
    </location>
</feature>
<feature type="transmembrane region" description="Helical" evidence="1">
    <location>
        <begin position="394"/>
        <end position="414"/>
    </location>
</feature>
<feature type="transmembrane region" description="Helical" evidence="1">
    <location>
        <begin position="419"/>
        <end position="439"/>
    </location>
</feature>
<sequence length="622" mass="68539">MNKDHKQSLPAVTLAAIGVVYGDIGTSPLYTLRECLAGHYGFGVERVAVFGFLSLIFWLLILIVSLKYLLFVMRADNAGEGGILTLMSLAGRNTGAKLTPVLVIIGLIGGSFFYGEVVITPAVSVMSAIEGLQIVAPSLQEFIVPLSVVVLTLLFFIQKKGTGSVGKLFAPVMLLWFLTLGVLGVRGIIYNPEVLYALNPKWAIAFFAEYRTVSFFALGAVVLAITGVEALYADMGHFGKLPIRIAWFSAVLPSLVLNYFGQGALLLSKPAAIKNPFFLLAPDWAMIPLLILATLATVIASQAVISGVFSLTRQAVRLGYMPPMRIIHTSEMEVGQIYIPFINWLLYIAVVLVIVSFEHSSNLAAAYGIAVTGTMVLTSILSCTVARKNWHLNLLIVSVLLLALLCLDVSMFAANALKIFSGGWLPLLLGFLMFIAMITWKSERFLLLRRIHEHGNSLEALIASLEKSPPVRVPGTAVFMSRAMNVIPFALLHNLKHNKVLHERVVLLTLRTEDAPFVHNVRRVTIEALSPTFWRVVASYGFKEAPDMEEIFHSCGLEGLSCRMMETSFFMSHESLILGKRPWYLMIRGKLFMVLSRNALRAPDQYLIPPNRVIELGTQIEI</sequence>
<reference key="1">
    <citation type="journal article" date="2006" name="Genome Res.">
        <title>Massive genome erosion and functional adaptations provide insights into the symbiotic lifestyle of Sodalis glossinidius in the tsetse host.</title>
        <authorList>
            <person name="Toh H."/>
            <person name="Weiss B.L."/>
            <person name="Perkin S.A.H."/>
            <person name="Yamashita A."/>
            <person name="Oshima K."/>
            <person name="Hattori M."/>
            <person name="Aksoy S."/>
        </authorList>
    </citation>
    <scope>NUCLEOTIDE SEQUENCE [LARGE SCALE GENOMIC DNA]</scope>
    <source>
        <strain>morsitans</strain>
    </source>
</reference>
<comment type="function">
    <text evidence="1">Responsible for the low-affinity transport of potassium into the cell. Likely operates as a K(+):H(+) symporter.</text>
</comment>
<comment type="catalytic activity">
    <reaction evidence="1">
        <text>K(+)(in) + H(+)(in) = K(+)(out) + H(+)(out)</text>
        <dbReference type="Rhea" id="RHEA:28490"/>
        <dbReference type="ChEBI" id="CHEBI:15378"/>
        <dbReference type="ChEBI" id="CHEBI:29103"/>
    </reaction>
    <physiologicalReaction direction="right-to-left" evidence="1">
        <dbReference type="Rhea" id="RHEA:28492"/>
    </physiologicalReaction>
</comment>
<comment type="subcellular location">
    <subcellularLocation>
        <location evidence="1">Cell inner membrane</location>
        <topology evidence="1">Multi-pass membrane protein</topology>
    </subcellularLocation>
</comment>
<comment type="similarity">
    <text evidence="1">Belongs to the HAK/KUP transporter (TC 2.A.72) family.</text>
</comment>
<accession>Q2NQ98</accession>
<keyword id="KW-0997">Cell inner membrane</keyword>
<keyword id="KW-1003">Cell membrane</keyword>
<keyword id="KW-0406">Ion transport</keyword>
<keyword id="KW-0472">Membrane</keyword>
<keyword id="KW-0630">Potassium</keyword>
<keyword id="KW-0633">Potassium transport</keyword>
<keyword id="KW-0769">Symport</keyword>
<keyword id="KW-0812">Transmembrane</keyword>
<keyword id="KW-1133">Transmembrane helix</keyword>
<keyword id="KW-0813">Transport</keyword>
<protein>
    <recommendedName>
        <fullName evidence="1">Low affinity potassium transport system protein Kup</fullName>
    </recommendedName>
    <alternativeName>
        <fullName evidence="1">Kup system potassium uptake protein</fullName>
    </alternativeName>
</protein>
<evidence type="ECO:0000255" key="1">
    <source>
        <dbReference type="HAMAP-Rule" id="MF_01522"/>
    </source>
</evidence>
<organism>
    <name type="scientific">Sodalis glossinidius (strain morsitans)</name>
    <dbReference type="NCBI Taxonomy" id="343509"/>
    <lineage>
        <taxon>Bacteria</taxon>
        <taxon>Pseudomonadati</taxon>
        <taxon>Pseudomonadota</taxon>
        <taxon>Gammaproteobacteria</taxon>
        <taxon>Enterobacterales</taxon>
        <taxon>Bruguierivoracaceae</taxon>
        <taxon>Sodalis</taxon>
    </lineage>
</organism>